<gene>
    <name evidence="1" type="primary">prfC</name>
    <name type="ordered locus">BAV3345</name>
</gene>
<keyword id="KW-0963">Cytoplasm</keyword>
<keyword id="KW-0342">GTP-binding</keyword>
<keyword id="KW-0547">Nucleotide-binding</keyword>
<keyword id="KW-0648">Protein biosynthesis</keyword>
<keyword id="KW-1185">Reference proteome</keyword>
<sequence length="535" mass="59463">MTILQEVARRRTFAIISHPDAGKTTLTEKLLLFAGAIQIAGSVKARKASRHASSDWMEIEKQRGISVASSVMQMEYRDCVINLLDTPGHQDFSEDTYRVLTAVDAALMVIDAANGVEPQTIRLLQVCRARNTPIITFINKMDREVREPLELLSEIESHLGMDAVPFSWPVGMGKSFGGVFDIRRDRMRLFRPGQERRNDDDEFIDGLSNPQIAERFGQAFEQASGEIELINEAAPAFDHAAFLAGKQTPVFFGSAINNFGVQEVLDALVDLAPQPGARQALEREVKPEEPKFTGVVFKVQANMDPAHRDRVAFVRVSSGRFERGMRLKVARTNKEMRPNNVVSFLSQRRELLDEAYAGDVIGIPNHGVLQLGDVLTEGESLRFTGLPFFAPELFQAVEVKDPLRTKQLRVGLTQLGEEGAIQVFRPEVAGGSLLLGAVGQLQFEVVAHRLKTEYGVEARMLPSRYTMARWITSENPKALRKFMDANAAHIAYDVVDAAAFLIGSSAQLRVAEELYPEVKFHAMREHGGKVFGDTL</sequence>
<organism>
    <name type="scientific">Bordetella avium (strain 197N)</name>
    <dbReference type="NCBI Taxonomy" id="360910"/>
    <lineage>
        <taxon>Bacteria</taxon>
        <taxon>Pseudomonadati</taxon>
        <taxon>Pseudomonadota</taxon>
        <taxon>Betaproteobacteria</taxon>
        <taxon>Burkholderiales</taxon>
        <taxon>Alcaligenaceae</taxon>
        <taxon>Bordetella</taxon>
    </lineage>
</organism>
<reference key="1">
    <citation type="journal article" date="2006" name="J. Bacteriol.">
        <title>Comparison of the genome sequence of the poultry pathogen Bordetella avium with those of B. bronchiseptica, B. pertussis, and B. parapertussis reveals extensive diversity in surface structures associated with host interaction.</title>
        <authorList>
            <person name="Sebaihia M."/>
            <person name="Preston A."/>
            <person name="Maskell D.J."/>
            <person name="Kuzmiak H."/>
            <person name="Connell T.D."/>
            <person name="King N.D."/>
            <person name="Orndorff P.E."/>
            <person name="Miyamoto D.M."/>
            <person name="Thomson N.R."/>
            <person name="Harris D."/>
            <person name="Goble A."/>
            <person name="Lord A."/>
            <person name="Murphy L."/>
            <person name="Quail M.A."/>
            <person name="Rutter S."/>
            <person name="Squares R."/>
            <person name="Squares S."/>
            <person name="Woodward J."/>
            <person name="Parkhill J."/>
            <person name="Temple L.M."/>
        </authorList>
    </citation>
    <scope>NUCLEOTIDE SEQUENCE [LARGE SCALE GENOMIC DNA]</scope>
    <source>
        <strain>197N</strain>
    </source>
</reference>
<name>RF3_BORA1</name>
<comment type="function">
    <text evidence="1">Increases the formation of ribosomal termination complexes and stimulates activities of RF-1 and RF-2. It binds guanine nucleotides and has strong preference for UGA stop codons. It may interact directly with the ribosome. The stimulation of RF-1 and RF-2 is significantly reduced by GTP and GDP, but not by GMP.</text>
</comment>
<comment type="subcellular location">
    <subcellularLocation>
        <location evidence="1">Cytoplasm</location>
    </subcellularLocation>
</comment>
<comment type="similarity">
    <text evidence="1">Belongs to the TRAFAC class translation factor GTPase superfamily. Classic translation factor GTPase family. PrfC subfamily.</text>
</comment>
<feature type="chain" id="PRO_0000242170" description="Peptide chain release factor 3">
    <location>
        <begin position="1"/>
        <end position="535"/>
    </location>
</feature>
<feature type="domain" description="tr-type G">
    <location>
        <begin position="8"/>
        <end position="276"/>
    </location>
</feature>
<feature type="binding site" evidence="1">
    <location>
        <begin position="17"/>
        <end position="24"/>
    </location>
    <ligand>
        <name>GTP</name>
        <dbReference type="ChEBI" id="CHEBI:37565"/>
    </ligand>
</feature>
<feature type="binding site" evidence="1">
    <location>
        <begin position="85"/>
        <end position="89"/>
    </location>
    <ligand>
        <name>GTP</name>
        <dbReference type="ChEBI" id="CHEBI:37565"/>
    </ligand>
</feature>
<feature type="binding site" evidence="1">
    <location>
        <begin position="139"/>
        <end position="142"/>
    </location>
    <ligand>
        <name>GTP</name>
        <dbReference type="ChEBI" id="CHEBI:37565"/>
    </ligand>
</feature>
<accession>Q2KTQ5</accession>
<dbReference type="EMBL" id="AM167904">
    <property type="protein sequence ID" value="CAJ50955.1"/>
    <property type="molecule type" value="Genomic_DNA"/>
</dbReference>
<dbReference type="RefSeq" id="WP_012418982.1">
    <property type="nucleotide sequence ID" value="NC_010645.1"/>
</dbReference>
<dbReference type="SMR" id="Q2KTQ5"/>
<dbReference type="STRING" id="360910.BAV3345"/>
<dbReference type="GeneID" id="92933394"/>
<dbReference type="KEGG" id="bav:BAV3345"/>
<dbReference type="eggNOG" id="COG4108">
    <property type="taxonomic scope" value="Bacteria"/>
</dbReference>
<dbReference type="HOGENOM" id="CLU_002794_2_1_4"/>
<dbReference type="OrthoDB" id="9804431at2"/>
<dbReference type="Proteomes" id="UP000001977">
    <property type="component" value="Chromosome"/>
</dbReference>
<dbReference type="GO" id="GO:0005829">
    <property type="term" value="C:cytosol"/>
    <property type="evidence" value="ECO:0007669"/>
    <property type="project" value="TreeGrafter"/>
</dbReference>
<dbReference type="GO" id="GO:0005525">
    <property type="term" value="F:GTP binding"/>
    <property type="evidence" value="ECO:0007669"/>
    <property type="project" value="UniProtKB-UniRule"/>
</dbReference>
<dbReference type="GO" id="GO:0003924">
    <property type="term" value="F:GTPase activity"/>
    <property type="evidence" value="ECO:0007669"/>
    <property type="project" value="InterPro"/>
</dbReference>
<dbReference type="GO" id="GO:0016150">
    <property type="term" value="F:translation release factor activity, codon nonspecific"/>
    <property type="evidence" value="ECO:0007669"/>
    <property type="project" value="TreeGrafter"/>
</dbReference>
<dbReference type="GO" id="GO:0016149">
    <property type="term" value="F:translation release factor activity, codon specific"/>
    <property type="evidence" value="ECO:0007669"/>
    <property type="project" value="UniProtKB-UniRule"/>
</dbReference>
<dbReference type="GO" id="GO:0006449">
    <property type="term" value="P:regulation of translational termination"/>
    <property type="evidence" value="ECO:0007669"/>
    <property type="project" value="UniProtKB-UniRule"/>
</dbReference>
<dbReference type="CDD" id="cd04169">
    <property type="entry name" value="RF3"/>
    <property type="match status" value="1"/>
</dbReference>
<dbReference type="FunFam" id="3.30.70.3280:FF:000001">
    <property type="entry name" value="Peptide chain release factor 3"/>
    <property type="match status" value="1"/>
</dbReference>
<dbReference type="FunFam" id="3.40.50.300:FF:000542">
    <property type="entry name" value="Peptide chain release factor 3"/>
    <property type="match status" value="1"/>
</dbReference>
<dbReference type="Gene3D" id="3.40.50.300">
    <property type="entry name" value="P-loop containing nucleotide triphosphate hydrolases"/>
    <property type="match status" value="2"/>
</dbReference>
<dbReference type="Gene3D" id="3.30.70.3280">
    <property type="entry name" value="Peptide chain release factor 3, domain III"/>
    <property type="match status" value="1"/>
</dbReference>
<dbReference type="HAMAP" id="MF_00072">
    <property type="entry name" value="Rel_fac_3"/>
    <property type="match status" value="1"/>
</dbReference>
<dbReference type="InterPro" id="IPR053905">
    <property type="entry name" value="EF-G-like_DII"/>
</dbReference>
<dbReference type="InterPro" id="IPR035647">
    <property type="entry name" value="EFG_III/V"/>
</dbReference>
<dbReference type="InterPro" id="IPR031157">
    <property type="entry name" value="G_TR_CS"/>
</dbReference>
<dbReference type="InterPro" id="IPR027417">
    <property type="entry name" value="P-loop_NTPase"/>
</dbReference>
<dbReference type="InterPro" id="IPR004548">
    <property type="entry name" value="PrfC"/>
</dbReference>
<dbReference type="InterPro" id="IPR032090">
    <property type="entry name" value="RF3_C"/>
</dbReference>
<dbReference type="InterPro" id="IPR038467">
    <property type="entry name" value="RF3_dom_3_sf"/>
</dbReference>
<dbReference type="InterPro" id="IPR041732">
    <property type="entry name" value="RF3_GTP-bd"/>
</dbReference>
<dbReference type="InterPro" id="IPR005225">
    <property type="entry name" value="Small_GTP-bd"/>
</dbReference>
<dbReference type="InterPro" id="IPR000795">
    <property type="entry name" value="T_Tr_GTP-bd_dom"/>
</dbReference>
<dbReference type="InterPro" id="IPR009000">
    <property type="entry name" value="Transl_B-barrel_sf"/>
</dbReference>
<dbReference type="NCBIfam" id="TIGR00503">
    <property type="entry name" value="prfC"/>
    <property type="match status" value="1"/>
</dbReference>
<dbReference type="NCBIfam" id="NF001964">
    <property type="entry name" value="PRK00741.1"/>
    <property type="match status" value="1"/>
</dbReference>
<dbReference type="NCBIfam" id="TIGR00231">
    <property type="entry name" value="small_GTP"/>
    <property type="match status" value="1"/>
</dbReference>
<dbReference type="PANTHER" id="PTHR43556">
    <property type="entry name" value="PEPTIDE CHAIN RELEASE FACTOR RF3"/>
    <property type="match status" value="1"/>
</dbReference>
<dbReference type="PANTHER" id="PTHR43556:SF2">
    <property type="entry name" value="PEPTIDE CHAIN RELEASE FACTOR RF3"/>
    <property type="match status" value="1"/>
</dbReference>
<dbReference type="Pfam" id="PF22042">
    <property type="entry name" value="EF-G_D2"/>
    <property type="match status" value="1"/>
</dbReference>
<dbReference type="Pfam" id="PF00009">
    <property type="entry name" value="GTP_EFTU"/>
    <property type="match status" value="1"/>
</dbReference>
<dbReference type="Pfam" id="PF16658">
    <property type="entry name" value="RF3_C"/>
    <property type="match status" value="1"/>
</dbReference>
<dbReference type="PRINTS" id="PR00315">
    <property type="entry name" value="ELONGATNFCT"/>
</dbReference>
<dbReference type="SUPFAM" id="SSF54980">
    <property type="entry name" value="EF-G C-terminal domain-like"/>
    <property type="match status" value="1"/>
</dbReference>
<dbReference type="SUPFAM" id="SSF52540">
    <property type="entry name" value="P-loop containing nucleoside triphosphate hydrolases"/>
    <property type="match status" value="1"/>
</dbReference>
<dbReference type="SUPFAM" id="SSF50447">
    <property type="entry name" value="Translation proteins"/>
    <property type="match status" value="1"/>
</dbReference>
<dbReference type="PROSITE" id="PS00301">
    <property type="entry name" value="G_TR_1"/>
    <property type="match status" value="1"/>
</dbReference>
<dbReference type="PROSITE" id="PS51722">
    <property type="entry name" value="G_TR_2"/>
    <property type="match status" value="1"/>
</dbReference>
<evidence type="ECO:0000255" key="1">
    <source>
        <dbReference type="HAMAP-Rule" id="MF_00072"/>
    </source>
</evidence>
<protein>
    <recommendedName>
        <fullName evidence="1">Peptide chain release factor 3</fullName>
        <shortName evidence="1">RF-3</shortName>
    </recommendedName>
</protein>
<proteinExistence type="inferred from homology"/>